<evidence type="ECO:0000305" key="1"/>
<feature type="chain" id="PRO_0000208100" description="Protein 2 in picA locus">
    <location>
        <begin position="1"/>
        <end position="191" status="greater than"/>
    </location>
</feature>
<feature type="non-terminal residue">
    <location>
        <position position="191"/>
    </location>
</feature>
<name>PIC2_RHIRD</name>
<sequence length="191" mass="20945">MSQSPPERFILLDGIRGVAALFIVHRHAEQFFGRDPASSYLAVDLFFALSGFVLAHAYGKKLYEGTITPGFFLKARFARLYPLYVLALALMAAYFICLYVLGLPTPIDDLHRLIDPGELAFALVTGLLFLPAPFTLTLNGALFLVSPAWSLFNELVVNAVYARWGARATMKQTVLVLAVSAVVLMVAAAEF</sequence>
<proteinExistence type="evidence at transcript level"/>
<organism>
    <name type="scientific">Rhizobium radiobacter</name>
    <name type="common">Agrobacterium tumefaciens</name>
    <name type="synonym">Agrobacterium radiobacter</name>
    <dbReference type="NCBI Taxonomy" id="358"/>
    <lineage>
        <taxon>Bacteria</taxon>
        <taxon>Pseudomonadati</taxon>
        <taxon>Pseudomonadota</taxon>
        <taxon>Alphaproteobacteria</taxon>
        <taxon>Hyphomicrobiales</taxon>
        <taxon>Rhizobiaceae</taxon>
        <taxon>Rhizobium/Agrobacterium group</taxon>
        <taxon>Agrobacterium</taxon>
        <taxon>Agrobacterium tumefaciens complex</taxon>
    </lineage>
</organism>
<accession>P29113</accession>
<protein>
    <recommendedName>
        <fullName>Protein 2 in picA locus</fullName>
    </recommendedName>
    <alternativeName>
        <fullName>ORF2</fullName>
    </alternativeName>
</protein>
<keyword id="KW-1003">Cell membrane</keyword>
<keyword id="KW-0472">Membrane</keyword>
<keyword id="KW-0812">Transmembrane</keyword>
<reference key="1">
    <citation type="journal article" date="1991" name="J. Bacteriol.">
        <title>Genetic and molecular analyses of picA, a plant-inducible locus on the Agrobacterium tumefaciens chromosome.</title>
        <authorList>
            <person name="Rong L."/>
            <person name="Karcher S.J."/>
            <person name="Gelvin S.B."/>
        </authorList>
    </citation>
    <scope>NUCLEOTIDE SEQUENCE [GENOMIC DNA]</scope>
    <source>
        <strain>A136</strain>
    </source>
</reference>
<comment type="function">
    <text>Seems to regulate the surface properties of the bacterium in the presence of plant cells or plant cell extracts.</text>
</comment>
<comment type="subcellular location">
    <subcellularLocation>
        <location evidence="1">Cell membrane</location>
    </subcellularLocation>
</comment>
<comment type="induction">
    <text>By certain acidic polysaccharides found in carrot root extract. This induction may be regulated by the polygalacturonase.</text>
</comment>
<comment type="similarity">
    <text evidence="1">Belongs to the acyltransferase 3 family.</text>
</comment>
<dbReference type="EMBL" id="M62814">
    <property type="protein sequence ID" value="AAA22105.1"/>
    <property type="molecule type" value="Genomic_DNA"/>
</dbReference>
<dbReference type="PIR" id="C40364">
    <property type="entry name" value="C40364"/>
</dbReference>
<dbReference type="GO" id="GO:0005886">
    <property type="term" value="C:plasma membrane"/>
    <property type="evidence" value="ECO:0007669"/>
    <property type="project" value="UniProtKB-SubCell"/>
</dbReference>
<dbReference type="GO" id="GO:0016747">
    <property type="term" value="F:acyltransferase activity, transferring groups other than amino-acyl groups"/>
    <property type="evidence" value="ECO:0007669"/>
    <property type="project" value="InterPro"/>
</dbReference>
<dbReference type="InterPro" id="IPR002656">
    <property type="entry name" value="Acyl_transf_3_dom"/>
</dbReference>
<dbReference type="InterPro" id="IPR050879">
    <property type="entry name" value="Acyltransferase_3"/>
</dbReference>
<dbReference type="PANTHER" id="PTHR23028">
    <property type="entry name" value="ACETYLTRANSFERASE"/>
    <property type="match status" value="1"/>
</dbReference>
<dbReference type="PANTHER" id="PTHR23028:SF134">
    <property type="entry name" value="PUTATIVE (AFU_ORTHOLOGUE AFUA_4G08520)-RELATED"/>
    <property type="match status" value="1"/>
</dbReference>
<dbReference type="Pfam" id="PF01757">
    <property type="entry name" value="Acyl_transf_3"/>
    <property type="match status" value="1"/>
</dbReference>